<sequence length="261" mass="29383">MNFREKYGQWGIVLGATEGIGKASAFELAKRGMDVILVGRRKEALEELAKAIHEETGKEIRVLPQDLSEYDAAERLIEATKDLDMGVIEYVACLHAMGQYNKVDYAKYEQMYRVNIRTFSKLLHHYIGEFKERDRGAFITIGSLSGWTSLPFCAEYAAEKAYMMTVTEGVAYECANTNVDVMLLSAGSTITPTWLKNKPSDPKAVAAAMYPEDVIKDGFEQLGKKFTYLAGELNREKMKENNAMDRNDLIAKLGKMFDHMA</sequence>
<reference key="1">
    <citation type="journal article" date="2012" name="Appl. Microbiol. Biotechnol.">
        <title>In search of sustainable chemical processes: cloning, recombinant expression, and functional characterization of the 7alpha- and 7beta-hydroxysteroid dehydrogenases from Clostridium absonum.</title>
        <authorList>
            <person name="Ferrandi E.E."/>
            <person name="Bertolesi G.M."/>
            <person name="Polentini F."/>
            <person name="Negri A."/>
            <person name="Riva S."/>
            <person name="Monti D."/>
        </authorList>
    </citation>
    <scope>NUCLEOTIDE SEQUENCE [GENOMIC DNA]</scope>
    <scope>FUNCTION</scope>
    <scope>CATALYTIC ACTIVITY</scope>
    <scope>BIOPHYSICOCHEMICAL PROPERTIES</scope>
    <scope>SUBUNIT</scope>
    <scope>BIOTECHNOLOGY</scope>
    <source>
        <strain>ATCC 27555 / DSM 599 / CIP 104302 / JCM 1381 / NCTC 10984 / HA 7103</strain>
    </source>
</reference>
<reference key="2">
    <citation type="journal article" date="1981" name="Biochim. Biophys. Acta">
        <title>Bile induction of 7 alpha- and 7 beta-hydroxysteroid dehydrogenases in Clostridium absonum.</title>
        <authorList>
            <person name="MacDonald I.A."/>
            <person name="Roach P.D."/>
        </authorList>
    </citation>
    <scope>INDUCTION BY BILE ACIDS</scope>
</reference>
<organism>
    <name type="scientific">Clostridium sardiniense</name>
    <name type="common">Clostridium absonum</name>
    <dbReference type="NCBI Taxonomy" id="29369"/>
    <lineage>
        <taxon>Bacteria</taxon>
        <taxon>Bacillati</taxon>
        <taxon>Bacillota</taxon>
        <taxon>Clostridia</taxon>
        <taxon>Eubacteriales</taxon>
        <taxon>Clostridiaceae</taxon>
        <taxon>Clostridium</taxon>
    </lineage>
</organism>
<gene>
    <name evidence="5" type="primary">hdhb</name>
</gene>
<feature type="chain" id="PRO_0000451450" description="7beta-hydroxysteroid dehydrogenase">
    <location>
        <begin position="1"/>
        <end position="261"/>
    </location>
</feature>
<feature type="active site" description="Proton acceptor" evidence="1">
    <location>
        <position position="156"/>
    </location>
</feature>
<feature type="binding site" evidence="1">
    <location>
        <begin position="17"/>
        <end position="21"/>
    </location>
    <ligand>
        <name>NADP(+)</name>
        <dbReference type="ChEBI" id="CHEBI:58349"/>
    </ligand>
</feature>
<feature type="binding site" evidence="1">
    <location>
        <begin position="40"/>
        <end position="41"/>
    </location>
    <ligand>
        <name>NADP(+)</name>
        <dbReference type="ChEBI" id="CHEBI:58349"/>
    </ligand>
</feature>
<feature type="binding site" evidence="1">
    <location>
        <begin position="66"/>
        <end position="67"/>
    </location>
    <ligand>
        <name>NADP(+)</name>
        <dbReference type="ChEBI" id="CHEBI:58349"/>
    </ligand>
</feature>
<feature type="site" description="Transition state stabilizer" evidence="1">
    <location>
        <position position="143"/>
    </location>
</feature>
<feature type="site" description="Lowers pKa of active site Tyr" evidence="2">
    <location>
        <position position="160"/>
    </location>
</feature>
<name>HSDHB_CLOSR</name>
<keyword id="KW-0088">Bile acid catabolism</keyword>
<keyword id="KW-0442">Lipid degradation</keyword>
<keyword id="KW-0443">Lipid metabolism</keyword>
<keyword id="KW-0521">NADP</keyword>
<keyword id="KW-0547">Nucleotide-binding</keyword>
<keyword id="KW-0560">Oxidoreductase</keyword>
<keyword id="KW-0753">Steroid metabolism</keyword>
<evidence type="ECO:0000250" key="1">
    <source>
        <dbReference type="UniProtKB" id="A4ECA9"/>
    </source>
</evidence>
<evidence type="ECO:0000250" key="2">
    <source>
        <dbReference type="UniProtKB" id="P0AET8"/>
    </source>
</evidence>
<evidence type="ECO:0000269" key="3">
    <source>
    </source>
</evidence>
<evidence type="ECO:0000269" key="4">
    <source>
    </source>
</evidence>
<evidence type="ECO:0000303" key="5">
    <source>
    </source>
</evidence>
<evidence type="ECO:0000305" key="6"/>
<evidence type="ECO:0000305" key="7">
    <source>
    </source>
</evidence>
<protein>
    <recommendedName>
        <fullName evidence="5">7beta-hydroxysteroid dehydrogenase</fullName>
        <shortName evidence="5">7beta-HSDH</shortName>
        <ecNumber evidence="3">1.1.1.201</ecNumber>
    </recommendedName>
    <alternativeName>
        <fullName evidence="5">NADP-dependent 7beta-hydroxysteroid dehydrogenase</fullName>
    </alternativeName>
</protein>
<proteinExistence type="evidence at protein level"/>
<comment type="function">
    <text evidence="3">7beta-hydroxysteroid dehydrogenase that catalyzes the reduction of the 7-oxo group of 7-oxosteroids, such as 3alpha,12alpha-dihydroxy-7-oxo-5beta-cholanate, 7-oxolithocholate, 7,12-dioxo-lithocholate and dehydrocholate, to the corresponding 7beta-hydroxysteroids. Is also able to catalyze the reverse oxidation reactions. Together with 7alpha-HSDH encoded in the adjacent gene, is likely involved in the epimerization of the hydroxy group at C-7 of primary bile acids through 7-keto bile acid intermediates.</text>
</comment>
<comment type="catalytic activity">
    <reaction evidence="3">
        <text>a 7beta-hydroxysteroid + NADP(+) = a 7-oxosteroid + NADPH + H(+)</text>
        <dbReference type="Rhea" id="RHEA:20233"/>
        <dbReference type="ChEBI" id="CHEBI:15378"/>
        <dbReference type="ChEBI" id="CHEBI:35349"/>
        <dbReference type="ChEBI" id="CHEBI:47789"/>
        <dbReference type="ChEBI" id="CHEBI:57783"/>
        <dbReference type="ChEBI" id="CHEBI:58349"/>
        <dbReference type="EC" id="1.1.1.201"/>
    </reaction>
    <physiologicalReaction direction="right-to-left" evidence="7">
        <dbReference type="Rhea" id="RHEA:20235"/>
    </physiologicalReaction>
</comment>
<comment type="catalytic activity">
    <reaction evidence="3">
        <text>ursocholate + NADP(+) = 3alpha,12alpha-dihydroxy-7-oxo-5beta-cholanate + NADPH + H(+)</text>
        <dbReference type="Rhea" id="RHEA:53856"/>
        <dbReference type="ChEBI" id="CHEBI:11893"/>
        <dbReference type="ChEBI" id="CHEBI:15378"/>
        <dbReference type="ChEBI" id="CHEBI:57783"/>
        <dbReference type="ChEBI" id="CHEBI:58349"/>
        <dbReference type="ChEBI" id="CHEBI:137880"/>
    </reaction>
    <physiologicalReaction direction="right-to-left" evidence="7">
        <dbReference type="Rhea" id="RHEA:53858"/>
    </physiologicalReaction>
</comment>
<comment type="catalytic activity">
    <reaction evidence="3">
        <text>7-oxolithocholate + NADPH + H(+) = ursodeoxycholate + NADP(+)</text>
        <dbReference type="Rhea" id="RHEA:47540"/>
        <dbReference type="ChEBI" id="CHEBI:15378"/>
        <dbReference type="ChEBI" id="CHEBI:57783"/>
        <dbReference type="ChEBI" id="CHEBI:58349"/>
        <dbReference type="ChEBI" id="CHEBI:78604"/>
        <dbReference type="ChEBI" id="CHEBI:78605"/>
    </reaction>
    <physiologicalReaction direction="left-to-right" evidence="7">
        <dbReference type="Rhea" id="RHEA:47541"/>
    </physiologicalReaction>
</comment>
<comment type="catalytic activity">
    <reaction evidence="3">
        <text>3alpha,7beta-dihydroxy-12-oxo-5beta-cholan-24-oate + NADP(+) = 7,12-dioxo-lithocholate + NADPH + H(+)</text>
        <dbReference type="Rhea" id="RHEA:53864"/>
        <dbReference type="ChEBI" id="CHEBI:15378"/>
        <dbReference type="ChEBI" id="CHEBI:57783"/>
        <dbReference type="ChEBI" id="CHEBI:58349"/>
        <dbReference type="ChEBI" id="CHEBI:137789"/>
        <dbReference type="ChEBI" id="CHEBI:137886"/>
    </reaction>
    <physiologicalReaction direction="right-to-left" evidence="7">
        <dbReference type="Rhea" id="RHEA:53866"/>
    </physiologicalReaction>
</comment>
<comment type="catalytic activity">
    <reaction evidence="3">
        <text>7beta-hydroxy-3,12-dioxo-5beta-cholan-24-oate + NADP(+) = dehydrocholate + NADPH + H(+)</text>
        <dbReference type="Rhea" id="RHEA:53860"/>
        <dbReference type="ChEBI" id="CHEBI:15378"/>
        <dbReference type="ChEBI" id="CHEBI:57783"/>
        <dbReference type="ChEBI" id="CHEBI:58349"/>
        <dbReference type="ChEBI" id="CHEBI:137881"/>
        <dbReference type="ChEBI" id="CHEBI:137882"/>
    </reaction>
    <physiologicalReaction direction="right-to-left" evidence="7">
        <dbReference type="Rhea" id="RHEA:53862"/>
    </physiologicalReaction>
</comment>
<comment type="biophysicochemical properties">
    <kinetics>
        <KM evidence="3">2.59 mM for ursocholate</KM>
        <KM evidence="3">2.3 mM for 3alpha,12alpha-dihydroxy-7-oxo-5beta-cholanate</KM>
        <KM evidence="3">3.06 mM for ursodeoxycholate</KM>
        <KM evidence="3">2.65 mM for 7-oxolithocholate</KM>
        <KM evidence="3">1.5 mM for 7,12-dioxo-lithocholate</KM>
        <KM evidence="3">1.58 mM for dehydrocholate</KM>
        <text evidence="3">kcat is 407000 sec(-1) for the oxidation of ursocholate. kcat is 203000 sec(-1) for the reduction of 3alpha,12alpha-dihydroxy-7-oxo-5beta-cholanate. kcat is 430000 sec(-1) for the oxidation of ursodeoxycholate. kcat is 639000 sec(-1) for the reduction of 7-oxolithocholate. kcat is 413000 sec(-1) for the reduction of 7,12-dioxo-lithocholate. kcat is 146000 sec(-1) for the reduction of dehydrocholate.</text>
    </kinetics>
    <phDependence>
        <text evidence="3">Shows a maximum of activity at pH 8.5 in the oxidation of ursocholate, and between pH 7.0 and 8.0 when tested in the reduction reaction of 3alpha,12alpha-dihydroxy-7-oxo-5beta-cholanate, with a gradual drop on the alkaline side and a sharp drop on the acidic side.</text>
    </phDependence>
    <temperatureDependence>
        <text evidence="3">Optimum temperature is 40 degrees Celsius. No activity is detected above 60 degrees Celsius.</text>
    </temperatureDependence>
</comment>
<comment type="subunit">
    <text evidence="3">Homodimer.</text>
</comment>
<comment type="induction">
    <text evidence="4">Induced by bile acids, when grown in the presence of deoxycholate or chenodeoxycholate.</text>
</comment>
<comment type="biotechnology">
    <text evidence="7">Could be a promising candidate for further applications in the epimerization reaction of bile acids at the C-7 position and thus may be used as a biocatalyst for the synthesis of bile acids derivatives of pharmacological interest.</text>
</comment>
<comment type="similarity">
    <text evidence="6">Belongs to the short-chain dehydrogenases/reductases (SDR) family.</text>
</comment>
<accession>G9FRD6</accession>
<dbReference type="EC" id="1.1.1.201" evidence="3"/>
<dbReference type="EMBL" id="JN191345">
    <property type="protein sequence ID" value="AET80684.1"/>
    <property type="molecule type" value="Genomic_DNA"/>
</dbReference>
<dbReference type="RefSeq" id="WP_221858491.1">
    <property type="nucleotide sequence ID" value="NZ_JAIKTU010000001.1"/>
</dbReference>
<dbReference type="SMR" id="G9FRD6"/>
<dbReference type="SwissLipids" id="SLP:000001739"/>
<dbReference type="GO" id="GO:0047022">
    <property type="term" value="F:7-beta-hydroxysteroid dehydrogenase (NADP+) activity"/>
    <property type="evidence" value="ECO:0007669"/>
    <property type="project" value="UniProtKB-EC"/>
</dbReference>
<dbReference type="GO" id="GO:0000166">
    <property type="term" value="F:nucleotide binding"/>
    <property type="evidence" value="ECO:0007669"/>
    <property type="project" value="UniProtKB-KW"/>
</dbReference>
<dbReference type="GO" id="GO:0030573">
    <property type="term" value="P:bile acid catabolic process"/>
    <property type="evidence" value="ECO:0007669"/>
    <property type="project" value="UniProtKB-KW"/>
</dbReference>
<dbReference type="GO" id="GO:0016042">
    <property type="term" value="P:lipid catabolic process"/>
    <property type="evidence" value="ECO:0007669"/>
    <property type="project" value="UniProtKB-KW"/>
</dbReference>
<dbReference type="Gene3D" id="3.40.50.720">
    <property type="entry name" value="NAD(P)-binding Rossmann-like Domain"/>
    <property type="match status" value="1"/>
</dbReference>
<dbReference type="InterPro" id="IPR036291">
    <property type="entry name" value="NAD(P)-bd_dom_sf"/>
</dbReference>
<dbReference type="InterPro" id="IPR002347">
    <property type="entry name" value="SDR_fam"/>
</dbReference>
<dbReference type="InterPro" id="IPR051019">
    <property type="entry name" value="VLCFA-Steroid_DH"/>
</dbReference>
<dbReference type="PANTHER" id="PTHR43899">
    <property type="entry name" value="RH59310P"/>
    <property type="match status" value="1"/>
</dbReference>
<dbReference type="PANTHER" id="PTHR43899:SF13">
    <property type="entry name" value="RH59310P"/>
    <property type="match status" value="1"/>
</dbReference>
<dbReference type="Pfam" id="PF00106">
    <property type="entry name" value="adh_short"/>
    <property type="match status" value="1"/>
</dbReference>
<dbReference type="PRINTS" id="PR00081">
    <property type="entry name" value="GDHRDH"/>
</dbReference>
<dbReference type="SUPFAM" id="SSF51735">
    <property type="entry name" value="NAD(P)-binding Rossmann-fold domains"/>
    <property type="match status" value="1"/>
</dbReference>